<feature type="chain" id="PRO_0000273157" description="SKA complex subunit 1">
    <location>
        <begin position="1"/>
        <end position="258"/>
    </location>
</feature>
<feature type="region of interest" description="Disordered" evidence="4">
    <location>
        <begin position="86"/>
        <end position="136"/>
    </location>
</feature>
<feature type="region of interest" description="Microtubule binding" evidence="1">
    <location>
        <begin position="137"/>
        <end position="258"/>
    </location>
</feature>
<feature type="coiled-coil region" evidence="3">
    <location>
        <begin position="5"/>
        <end position="25"/>
    </location>
</feature>
<accession>Q6DHG8</accession>
<evidence type="ECO:0000250" key="1">
    <source>
        <dbReference type="UniProtKB" id="Q96BD8"/>
    </source>
</evidence>
<evidence type="ECO:0000250" key="2">
    <source>
        <dbReference type="UniProtKB" id="Q9CPV1"/>
    </source>
</evidence>
<evidence type="ECO:0000255" key="3"/>
<evidence type="ECO:0000256" key="4">
    <source>
        <dbReference type="SAM" id="MobiDB-lite"/>
    </source>
</evidence>
<evidence type="ECO:0000305" key="5"/>
<dbReference type="EMBL" id="BC076006">
    <property type="protein sequence ID" value="AAH76006.1"/>
    <property type="molecule type" value="mRNA"/>
</dbReference>
<dbReference type="RefSeq" id="NP_001002592.1">
    <property type="nucleotide sequence ID" value="NM_001002592.1"/>
</dbReference>
<dbReference type="RefSeq" id="XP_005155684.1">
    <property type="nucleotide sequence ID" value="XM_005155627.5"/>
</dbReference>
<dbReference type="SMR" id="Q6DHG8"/>
<dbReference type="FunCoup" id="Q6DHG8">
    <property type="interactions" value="361"/>
</dbReference>
<dbReference type="STRING" id="7955.ENSDARP00000057512"/>
<dbReference type="PaxDb" id="7955-ENSDARP00000057512"/>
<dbReference type="Ensembl" id="ENSDART00000057513">
    <property type="protein sequence ID" value="ENSDARP00000057512"/>
    <property type="gene ID" value="ENSDARG00000039354"/>
</dbReference>
<dbReference type="Ensembl" id="ENSDART00000145077">
    <property type="protein sequence ID" value="ENSDARP00000117308"/>
    <property type="gene ID" value="ENSDARG00000039354"/>
</dbReference>
<dbReference type="GeneID" id="436865"/>
<dbReference type="KEGG" id="dre:436865"/>
<dbReference type="AGR" id="ZFIN:ZDB-GENE-040718-334"/>
<dbReference type="CTD" id="220134"/>
<dbReference type="ZFIN" id="ZDB-GENE-040718-334">
    <property type="gene designation" value="ska1"/>
</dbReference>
<dbReference type="eggNOG" id="KOG4832">
    <property type="taxonomic scope" value="Eukaryota"/>
</dbReference>
<dbReference type="HOGENOM" id="CLU_096842_0_0_1"/>
<dbReference type="InParanoid" id="Q6DHG8"/>
<dbReference type="OMA" id="PTGMRED"/>
<dbReference type="OrthoDB" id="5962at2759"/>
<dbReference type="PhylomeDB" id="Q6DHG8"/>
<dbReference type="TreeFam" id="TF324442"/>
<dbReference type="PRO" id="PR:Q6DHG8"/>
<dbReference type="Proteomes" id="UP000000437">
    <property type="component" value="Chromosome 10"/>
</dbReference>
<dbReference type="Bgee" id="ENSDARG00000039354">
    <property type="expression patterns" value="Expressed in testis and 26 other cell types or tissues"/>
</dbReference>
<dbReference type="GO" id="GO:0005737">
    <property type="term" value="C:cytoplasm"/>
    <property type="evidence" value="ECO:0007669"/>
    <property type="project" value="UniProtKB-KW"/>
</dbReference>
<dbReference type="GO" id="GO:0072687">
    <property type="term" value="C:meiotic spindle"/>
    <property type="evidence" value="ECO:0000250"/>
    <property type="project" value="UniProtKB"/>
</dbReference>
<dbReference type="GO" id="GO:0072686">
    <property type="term" value="C:mitotic spindle"/>
    <property type="evidence" value="ECO:0000318"/>
    <property type="project" value="GO_Central"/>
</dbReference>
<dbReference type="GO" id="GO:0000940">
    <property type="term" value="C:outer kinetochore"/>
    <property type="evidence" value="ECO:0000250"/>
    <property type="project" value="UniProtKB"/>
</dbReference>
<dbReference type="GO" id="GO:0005876">
    <property type="term" value="C:spindle microtubule"/>
    <property type="evidence" value="ECO:0000318"/>
    <property type="project" value="GO_Central"/>
</dbReference>
<dbReference type="GO" id="GO:0008017">
    <property type="term" value="F:microtubule binding"/>
    <property type="evidence" value="ECO:0000250"/>
    <property type="project" value="UniProtKB"/>
</dbReference>
<dbReference type="GO" id="GO:0051315">
    <property type="term" value="P:attachment of mitotic spindle microtubules to kinetochore"/>
    <property type="evidence" value="ECO:0000250"/>
    <property type="project" value="UniProtKB"/>
</dbReference>
<dbReference type="GO" id="GO:0051301">
    <property type="term" value="P:cell division"/>
    <property type="evidence" value="ECO:0007669"/>
    <property type="project" value="UniProtKB-KW"/>
</dbReference>
<dbReference type="GO" id="GO:0007059">
    <property type="term" value="P:chromosome segregation"/>
    <property type="evidence" value="ECO:0000318"/>
    <property type="project" value="GO_Central"/>
</dbReference>
<dbReference type="GO" id="GO:0000278">
    <property type="term" value="P:mitotic cell cycle"/>
    <property type="evidence" value="ECO:0000250"/>
    <property type="project" value="UniProtKB"/>
</dbReference>
<dbReference type="GO" id="GO:0007080">
    <property type="term" value="P:mitotic metaphase chromosome alignment"/>
    <property type="evidence" value="ECO:0000250"/>
    <property type="project" value="UniProtKB"/>
</dbReference>
<dbReference type="GO" id="GO:0000070">
    <property type="term" value="P:mitotic sister chromatid segregation"/>
    <property type="evidence" value="ECO:0000250"/>
    <property type="project" value="UniProtKB"/>
</dbReference>
<dbReference type="GO" id="GO:0031110">
    <property type="term" value="P:regulation of microtubule polymerization or depolymerization"/>
    <property type="evidence" value="ECO:0000250"/>
    <property type="project" value="UniProtKB"/>
</dbReference>
<dbReference type="CDD" id="cd12958">
    <property type="entry name" value="SKA1_N"/>
    <property type="match status" value="1"/>
</dbReference>
<dbReference type="FunFam" id="1.10.10.1890:FF:000002">
    <property type="entry name" value="Spindle and kinetochore-associated protein 1"/>
    <property type="match status" value="1"/>
</dbReference>
<dbReference type="Gene3D" id="6.10.250.1370">
    <property type="match status" value="1"/>
</dbReference>
<dbReference type="Gene3D" id="1.10.10.1890">
    <property type="entry name" value="Ska1 microtubule binding domain-like"/>
    <property type="match status" value="1"/>
</dbReference>
<dbReference type="InterPro" id="IPR009829">
    <property type="entry name" value="SKA1"/>
</dbReference>
<dbReference type="InterPro" id="IPR042031">
    <property type="entry name" value="SKA1_MBD_sf"/>
</dbReference>
<dbReference type="PANTHER" id="PTHR28573">
    <property type="entry name" value="SPINDLE AND KINETOCHORE-ASSOCIATED PROTEIN 1"/>
    <property type="match status" value="1"/>
</dbReference>
<dbReference type="PANTHER" id="PTHR28573:SF1">
    <property type="entry name" value="SPINDLE AND KINETOCHORE-ASSOCIATED PROTEIN 1"/>
    <property type="match status" value="1"/>
</dbReference>
<dbReference type="Pfam" id="PF07160">
    <property type="entry name" value="SKA1"/>
    <property type="match status" value="1"/>
</dbReference>
<sequence length="258" mass="29669">MNHCELEEVTQHINNKISMIKRLLELRAVAKDPDKRGTLLKIGQEVSAINELLDRFEKYVGKQRDLLKHLKDLEGFFQEDEQDAYHLKNNTPPHMPKRGQQAAPQGGGQVAVQSRQTDAPAAPQEQGPPRKTQRNQIKEMEFITVPEFDSIPPYMKGRVTYDQLNAAVQSINTAVTSKYKILHQPVKTLNNVSRSLQQRFKDQETKDTKGHFFVVEQDIKEFAQLKVDKRFVGMLNMLRHCQRLKEVRGGGLTRFILL</sequence>
<name>SKA1_DANRE</name>
<reference key="1">
    <citation type="submission" date="2004-07" db="EMBL/GenBank/DDBJ databases">
        <authorList>
            <consortium name="NIH - Zebrafish Gene Collection (ZGC) project"/>
        </authorList>
    </citation>
    <scope>NUCLEOTIDE SEQUENCE [LARGE SCALE MRNA]</scope>
</reference>
<comment type="function">
    <text evidence="1 2">Component of the SKA complex, a microtubule plus end-binding complex of the outer kinetochore that stabilizes spindle microtubule-kinetochore attachments, promotes alignment of chromosomes at the mitotic spindle equator (chromosome congression) and assists suppression of the spindle assembly checkpoint. Kinetochores, consisting of a centromere-associated inner segment and a microtubule-contacting outer segment, play a crucial role in chromosome segregation by mediating the physical connection between centromeric DNA and spindle microtubules. The outer kinetochore is made up of the ten-subunit KMN network complex, comprising the MIS12, NDC80 and KNL1 complexes, and auxiliary microtubule-associated components such as the SKA complex; together they connect the outer kinetochore with the inner kinetochore, bind microtubules, and mediate interactions with mitotic checkpoint proteins that delay anaphase until chromosomes are bioriented on the spindle. The SKA complex is loaded onto bioriented kinetochores and it facilitates chromosome congression by stabilizing microtubules together with MAPRE1, and end-on attachment of the NDC80 complex to depolymerizing spindle microtubules, thereby assisting the poleward-moving kinetochore in withstanding microtubule pulling forces. The complex associates with dynamic microtubule plus-ends and can track both depolymerizing and elongating microtubules. The complex recruits protein phosphatase 1 (PP1) to the kinetochore in prometaphase and metaphase, to oppose spindle assembly checkpoint signaling and promote the onset of anaphase. In the complex, it mediates interactions with microtubules. It also stimulates AURKB/Aurora B catalytic activity (By similarity). During meiosis the SKA complex stabilizes the meiotic spindle and is required for its migration to the cortex (By similarity).</text>
</comment>
<comment type="subunit">
    <text evidence="1">Component of the SKA complex, composed of ska1, ska2 and ska3.</text>
</comment>
<comment type="subcellular location">
    <subcellularLocation>
        <location evidence="1">Cytoplasm</location>
        <location evidence="1">Cytoskeleton</location>
        <location evidence="1">Spindle</location>
    </subcellularLocation>
    <subcellularLocation>
        <location evidence="1">Chromosome</location>
        <location evidence="1">Centromere</location>
        <location evidence="1">Kinetochore</location>
    </subcellularLocation>
</comment>
<comment type="similarity">
    <text evidence="5">Belongs to the SKA1 family.</text>
</comment>
<gene>
    <name type="primary">ska1</name>
    <name type="ORF">zgc:92321</name>
</gene>
<protein>
    <recommendedName>
        <fullName evidence="5">SKA complex subunit 1</fullName>
    </recommendedName>
    <alternativeName>
        <fullName>Spindle and kinetochore-associated protein 1</fullName>
    </alternativeName>
</protein>
<organism>
    <name type="scientific">Danio rerio</name>
    <name type="common">Zebrafish</name>
    <name type="synonym">Brachydanio rerio</name>
    <dbReference type="NCBI Taxonomy" id="7955"/>
    <lineage>
        <taxon>Eukaryota</taxon>
        <taxon>Metazoa</taxon>
        <taxon>Chordata</taxon>
        <taxon>Craniata</taxon>
        <taxon>Vertebrata</taxon>
        <taxon>Euteleostomi</taxon>
        <taxon>Actinopterygii</taxon>
        <taxon>Neopterygii</taxon>
        <taxon>Teleostei</taxon>
        <taxon>Ostariophysi</taxon>
        <taxon>Cypriniformes</taxon>
        <taxon>Danionidae</taxon>
        <taxon>Danioninae</taxon>
        <taxon>Danio</taxon>
    </lineage>
</organism>
<proteinExistence type="evidence at transcript level"/>
<keyword id="KW-0131">Cell cycle</keyword>
<keyword id="KW-0132">Cell division</keyword>
<keyword id="KW-0137">Centromere</keyword>
<keyword id="KW-0158">Chromosome</keyword>
<keyword id="KW-0175">Coiled coil</keyword>
<keyword id="KW-0963">Cytoplasm</keyword>
<keyword id="KW-0206">Cytoskeleton</keyword>
<keyword id="KW-0995">Kinetochore</keyword>
<keyword id="KW-0493">Microtubule</keyword>
<keyword id="KW-0498">Mitosis</keyword>
<keyword id="KW-1185">Reference proteome</keyword>